<organism>
    <name type="scientific">Bacillus subtilis (strain 168)</name>
    <dbReference type="NCBI Taxonomy" id="224308"/>
    <lineage>
        <taxon>Bacteria</taxon>
        <taxon>Bacillati</taxon>
        <taxon>Bacillota</taxon>
        <taxon>Bacilli</taxon>
        <taxon>Bacillales</taxon>
        <taxon>Bacillaceae</taxon>
        <taxon>Bacillus</taxon>
    </lineage>
</organism>
<reference key="1">
    <citation type="journal article" date="1998" name="Microbiology">
        <title>The 172 kb prkA-addAB region from 83 degrees to 97 degrees of the Bacillus subtilis chromosome contains several dysfunctional genes, the glyB marker, many genes encoding transporter proteins, and the ubiquitous hit gene.</title>
        <authorList>
            <person name="Noback M.A."/>
            <person name="Holsappel S."/>
            <person name="Kiewiet R."/>
            <person name="Terpstra P."/>
            <person name="Wambutt R."/>
            <person name="Wedler H."/>
            <person name="Venema G."/>
            <person name="Bron S."/>
        </authorList>
    </citation>
    <scope>NUCLEOTIDE SEQUENCE [GENOMIC DNA]</scope>
    <source>
        <strain>168</strain>
    </source>
</reference>
<reference key="2">
    <citation type="journal article" date="1997" name="Nature">
        <title>The complete genome sequence of the Gram-positive bacterium Bacillus subtilis.</title>
        <authorList>
            <person name="Kunst F."/>
            <person name="Ogasawara N."/>
            <person name="Moszer I."/>
            <person name="Albertini A.M."/>
            <person name="Alloni G."/>
            <person name="Azevedo V."/>
            <person name="Bertero M.G."/>
            <person name="Bessieres P."/>
            <person name="Bolotin A."/>
            <person name="Borchert S."/>
            <person name="Borriss R."/>
            <person name="Boursier L."/>
            <person name="Brans A."/>
            <person name="Braun M."/>
            <person name="Brignell S.C."/>
            <person name="Bron S."/>
            <person name="Brouillet S."/>
            <person name="Bruschi C.V."/>
            <person name="Caldwell B."/>
            <person name="Capuano V."/>
            <person name="Carter N.M."/>
            <person name="Choi S.-K."/>
            <person name="Codani J.-J."/>
            <person name="Connerton I.F."/>
            <person name="Cummings N.J."/>
            <person name="Daniel R.A."/>
            <person name="Denizot F."/>
            <person name="Devine K.M."/>
            <person name="Duesterhoeft A."/>
            <person name="Ehrlich S.D."/>
            <person name="Emmerson P.T."/>
            <person name="Entian K.-D."/>
            <person name="Errington J."/>
            <person name="Fabret C."/>
            <person name="Ferrari E."/>
            <person name="Foulger D."/>
            <person name="Fritz C."/>
            <person name="Fujita M."/>
            <person name="Fujita Y."/>
            <person name="Fuma S."/>
            <person name="Galizzi A."/>
            <person name="Galleron N."/>
            <person name="Ghim S.-Y."/>
            <person name="Glaser P."/>
            <person name="Goffeau A."/>
            <person name="Golightly E.J."/>
            <person name="Grandi G."/>
            <person name="Guiseppi G."/>
            <person name="Guy B.J."/>
            <person name="Haga K."/>
            <person name="Haiech J."/>
            <person name="Harwood C.R."/>
            <person name="Henaut A."/>
            <person name="Hilbert H."/>
            <person name="Holsappel S."/>
            <person name="Hosono S."/>
            <person name="Hullo M.-F."/>
            <person name="Itaya M."/>
            <person name="Jones L.-M."/>
            <person name="Joris B."/>
            <person name="Karamata D."/>
            <person name="Kasahara Y."/>
            <person name="Klaerr-Blanchard M."/>
            <person name="Klein C."/>
            <person name="Kobayashi Y."/>
            <person name="Koetter P."/>
            <person name="Koningstein G."/>
            <person name="Krogh S."/>
            <person name="Kumano M."/>
            <person name="Kurita K."/>
            <person name="Lapidus A."/>
            <person name="Lardinois S."/>
            <person name="Lauber J."/>
            <person name="Lazarevic V."/>
            <person name="Lee S.-M."/>
            <person name="Levine A."/>
            <person name="Liu H."/>
            <person name="Masuda S."/>
            <person name="Mauel C."/>
            <person name="Medigue C."/>
            <person name="Medina N."/>
            <person name="Mellado R.P."/>
            <person name="Mizuno M."/>
            <person name="Moestl D."/>
            <person name="Nakai S."/>
            <person name="Noback M."/>
            <person name="Noone D."/>
            <person name="O'Reilly M."/>
            <person name="Ogawa K."/>
            <person name="Ogiwara A."/>
            <person name="Oudega B."/>
            <person name="Park S.-H."/>
            <person name="Parro V."/>
            <person name="Pohl T.M."/>
            <person name="Portetelle D."/>
            <person name="Porwollik S."/>
            <person name="Prescott A.M."/>
            <person name="Presecan E."/>
            <person name="Pujic P."/>
            <person name="Purnelle B."/>
            <person name="Rapoport G."/>
            <person name="Rey M."/>
            <person name="Reynolds S."/>
            <person name="Rieger M."/>
            <person name="Rivolta C."/>
            <person name="Rocha E."/>
            <person name="Roche B."/>
            <person name="Rose M."/>
            <person name="Sadaie Y."/>
            <person name="Sato T."/>
            <person name="Scanlan E."/>
            <person name="Schleich S."/>
            <person name="Schroeter R."/>
            <person name="Scoffone F."/>
            <person name="Sekiguchi J."/>
            <person name="Sekowska A."/>
            <person name="Seror S.J."/>
            <person name="Serror P."/>
            <person name="Shin B.-S."/>
            <person name="Soldo B."/>
            <person name="Sorokin A."/>
            <person name="Tacconi E."/>
            <person name="Takagi T."/>
            <person name="Takahashi H."/>
            <person name="Takemaru K."/>
            <person name="Takeuchi M."/>
            <person name="Tamakoshi A."/>
            <person name="Tanaka T."/>
            <person name="Terpstra P."/>
            <person name="Tognoni A."/>
            <person name="Tosato V."/>
            <person name="Uchiyama S."/>
            <person name="Vandenbol M."/>
            <person name="Vannier F."/>
            <person name="Vassarotti A."/>
            <person name="Viari A."/>
            <person name="Wambutt R."/>
            <person name="Wedler E."/>
            <person name="Wedler H."/>
            <person name="Weitzenegger T."/>
            <person name="Winters P."/>
            <person name="Wipat A."/>
            <person name="Yamamoto H."/>
            <person name="Yamane K."/>
            <person name="Yasumoto K."/>
            <person name="Yata K."/>
            <person name="Yoshida K."/>
            <person name="Yoshikawa H.-F."/>
            <person name="Zumstein E."/>
            <person name="Yoshikawa H."/>
            <person name="Danchin A."/>
        </authorList>
    </citation>
    <scope>NUCLEOTIDE SEQUENCE [LARGE SCALE GENOMIC DNA]</scope>
    <source>
        <strain>168</strain>
    </source>
</reference>
<reference key="3">
    <citation type="journal article" date="2009" name="Microbiology">
        <title>From a consortium sequence to a unified sequence: the Bacillus subtilis 168 reference genome a decade later.</title>
        <authorList>
            <person name="Barbe V."/>
            <person name="Cruveiller S."/>
            <person name="Kunst F."/>
            <person name="Lenoble P."/>
            <person name="Meurice G."/>
            <person name="Sekowska A."/>
            <person name="Vallenet D."/>
            <person name="Wang T."/>
            <person name="Moszer I."/>
            <person name="Medigue C."/>
            <person name="Danchin A."/>
        </authorList>
    </citation>
    <scope>SEQUENCE REVISION TO 120</scope>
</reference>
<reference key="4">
    <citation type="journal article" date="1993" name="J. Bacteriol.">
        <title>Cloning, nucleotide sequence, and regulation of the Bacillus subtilis pbpF gene, which codes for a putative class A high-molecular-weight penicillin-binding protein.</title>
        <authorList>
            <person name="Popham D.L."/>
            <person name="Setlow P."/>
        </authorList>
    </citation>
    <scope>NUCLEOTIDE SEQUENCE [GENOMIC DNA] OF 1-129</scope>
    <source>
        <strain>168</strain>
    </source>
</reference>
<reference key="5">
    <citation type="journal article" date="1992" name="J. Bacteriol.">
        <title>Cloning and characterization of the Bacillus subtilis hemEHY gene cluster, which encodes protoheme IX biosynthetic enzymes.</title>
        <authorList>
            <person name="Hansson M."/>
            <person name="Hederstedt L."/>
        </authorList>
    </citation>
    <scope>NUCLEOTIDE SEQUENCE [GENOMIC DNA] OF 122-714</scope>
</reference>
<dbReference type="EC" id="2.4.99.28" evidence="1"/>
<dbReference type="EC" id="3.4.16.4" evidence="1"/>
<dbReference type="EMBL" id="Y14083">
    <property type="protein sequence ID" value="CAA74517.1"/>
    <property type="molecule type" value="Genomic_DNA"/>
</dbReference>
<dbReference type="EMBL" id="AL009126">
    <property type="protein sequence ID" value="CAB12851.2"/>
    <property type="molecule type" value="Genomic_DNA"/>
</dbReference>
<dbReference type="EMBL" id="L10630">
    <property type="protein sequence ID" value="AAA71942.1"/>
    <property type="molecule type" value="Genomic_DNA"/>
</dbReference>
<dbReference type="EMBL" id="M97208">
    <property type="protein sequence ID" value="AAA22516.1"/>
    <property type="molecule type" value="Genomic_DNA"/>
</dbReference>
<dbReference type="PIR" id="A40614">
    <property type="entry name" value="A40614"/>
</dbReference>
<dbReference type="RefSeq" id="NP_388892.2">
    <property type="nucleotide sequence ID" value="NC_000964.3"/>
</dbReference>
<dbReference type="RefSeq" id="WP_003233213.1">
    <property type="nucleotide sequence ID" value="NZ_OZ025638.1"/>
</dbReference>
<dbReference type="SMR" id="P38050"/>
<dbReference type="FunCoup" id="P38050">
    <property type="interactions" value="60"/>
</dbReference>
<dbReference type="IntAct" id="P38050">
    <property type="interactions" value="1"/>
</dbReference>
<dbReference type="STRING" id="224308.BSU10110"/>
<dbReference type="CAZy" id="GT51">
    <property type="family name" value="Glycosyltransferase Family 51"/>
</dbReference>
<dbReference type="PaxDb" id="224308-BSU10110"/>
<dbReference type="EnsemblBacteria" id="CAB12851">
    <property type="protein sequence ID" value="CAB12851"/>
    <property type="gene ID" value="BSU_10110"/>
</dbReference>
<dbReference type="GeneID" id="939766"/>
<dbReference type="KEGG" id="bsu:BSU10110"/>
<dbReference type="PATRIC" id="fig|224308.179.peg.1087"/>
<dbReference type="eggNOG" id="COG0744">
    <property type="taxonomic scope" value="Bacteria"/>
</dbReference>
<dbReference type="InParanoid" id="P38050"/>
<dbReference type="OrthoDB" id="9766909at2"/>
<dbReference type="PhylomeDB" id="P38050"/>
<dbReference type="BioCyc" id="BSUB:BSU10110-MONOMER"/>
<dbReference type="UniPathway" id="UPA00219"/>
<dbReference type="Proteomes" id="UP000001570">
    <property type="component" value="Chromosome"/>
</dbReference>
<dbReference type="GO" id="GO:0030288">
    <property type="term" value="C:outer membrane-bounded periplasmic space"/>
    <property type="evidence" value="ECO:0000318"/>
    <property type="project" value="GO_Central"/>
</dbReference>
<dbReference type="GO" id="GO:0005886">
    <property type="term" value="C:plasma membrane"/>
    <property type="evidence" value="ECO:0007669"/>
    <property type="project" value="UniProtKB-SubCell"/>
</dbReference>
<dbReference type="GO" id="GO:0008658">
    <property type="term" value="F:penicillin binding"/>
    <property type="evidence" value="ECO:0007669"/>
    <property type="project" value="InterPro"/>
</dbReference>
<dbReference type="GO" id="GO:0008955">
    <property type="term" value="F:peptidoglycan glycosyltransferase activity"/>
    <property type="evidence" value="ECO:0000318"/>
    <property type="project" value="GO_Central"/>
</dbReference>
<dbReference type="GO" id="GO:0009002">
    <property type="term" value="F:serine-type D-Ala-D-Ala carboxypeptidase activity"/>
    <property type="evidence" value="ECO:0007669"/>
    <property type="project" value="UniProtKB-EC"/>
</dbReference>
<dbReference type="GO" id="GO:0071555">
    <property type="term" value="P:cell wall organization"/>
    <property type="evidence" value="ECO:0007669"/>
    <property type="project" value="UniProtKB-KW"/>
</dbReference>
<dbReference type="GO" id="GO:0009252">
    <property type="term" value="P:peptidoglycan biosynthetic process"/>
    <property type="evidence" value="ECO:0000318"/>
    <property type="project" value="GO_Central"/>
</dbReference>
<dbReference type="GO" id="GO:0006508">
    <property type="term" value="P:proteolysis"/>
    <property type="evidence" value="ECO:0007669"/>
    <property type="project" value="UniProtKB-KW"/>
</dbReference>
<dbReference type="GO" id="GO:0008360">
    <property type="term" value="P:regulation of cell shape"/>
    <property type="evidence" value="ECO:0007669"/>
    <property type="project" value="UniProtKB-KW"/>
</dbReference>
<dbReference type="FunFam" id="1.10.3810.10:FF:000001">
    <property type="entry name" value="Penicillin-binding protein 1A"/>
    <property type="match status" value="1"/>
</dbReference>
<dbReference type="Gene3D" id="1.10.3810.10">
    <property type="entry name" value="Biosynthetic peptidoglycan transglycosylase-like"/>
    <property type="match status" value="1"/>
</dbReference>
<dbReference type="Gene3D" id="3.40.710.10">
    <property type="entry name" value="DD-peptidase/beta-lactamase superfamily"/>
    <property type="match status" value="1"/>
</dbReference>
<dbReference type="InterPro" id="IPR012338">
    <property type="entry name" value="Beta-lactam/transpept-like"/>
</dbReference>
<dbReference type="InterPro" id="IPR001264">
    <property type="entry name" value="Glyco_trans_51"/>
</dbReference>
<dbReference type="InterPro" id="IPR050396">
    <property type="entry name" value="Glycosyltr_51/Transpeptidase"/>
</dbReference>
<dbReference type="InterPro" id="IPR023346">
    <property type="entry name" value="Lysozyme-like_dom_sf"/>
</dbReference>
<dbReference type="InterPro" id="IPR036950">
    <property type="entry name" value="PBP_transglycosylase"/>
</dbReference>
<dbReference type="InterPro" id="IPR001460">
    <property type="entry name" value="PCN-bd_Tpept"/>
</dbReference>
<dbReference type="NCBIfam" id="TIGR02074">
    <property type="entry name" value="PBP_1a_fam"/>
    <property type="match status" value="1"/>
</dbReference>
<dbReference type="PANTHER" id="PTHR32282">
    <property type="entry name" value="BINDING PROTEIN TRANSPEPTIDASE, PUTATIVE-RELATED"/>
    <property type="match status" value="1"/>
</dbReference>
<dbReference type="PANTHER" id="PTHR32282:SF32">
    <property type="entry name" value="PENICILLIN-BINDING PROTEIN 2A"/>
    <property type="match status" value="1"/>
</dbReference>
<dbReference type="Pfam" id="PF00912">
    <property type="entry name" value="Transgly"/>
    <property type="match status" value="1"/>
</dbReference>
<dbReference type="Pfam" id="PF00905">
    <property type="entry name" value="Transpeptidase"/>
    <property type="match status" value="1"/>
</dbReference>
<dbReference type="SUPFAM" id="SSF56601">
    <property type="entry name" value="beta-lactamase/transpeptidase-like"/>
    <property type="match status" value="1"/>
</dbReference>
<dbReference type="SUPFAM" id="SSF53955">
    <property type="entry name" value="Lysozyme-like"/>
    <property type="match status" value="1"/>
</dbReference>
<proteinExistence type="evidence at transcript level"/>
<evidence type="ECO:0000250" key="1">
    <source>
        <dbReference type="UniProtKB" id="P02918"/>
    </source>
</evidence>
<evidence type="ECO:0000250" key="2">
    <source>
        <dbReference type="UniProtKB" id="P02919"/>
    </source>
</evidence>
<evidence type="ECO:0000255" key="3"/>
<evidence type="ECO:0000305" key="4"/>
<accession>P38050</accession>
<keyword id="KW-0121">Carboxypeptidase</keyword>
<keyword id="KW-1003">Cell membrane</keyword>
<keyword id="KW-0133">Cell shape</keyword>
<keyword id="KW-0961">Cell wall biogenesis/degradation</keyword>
<keyword id="KW-0328">Glycosyltransferase</keyword>
<keyword id="KW-0378">Hydrolase</keyword>
<keyword id="KW-0472">Membrane</keyword>
<keyword id="KW-0511">Multifunctional enzyme</keyword>
<keyword id="KW-0573">Peptidoglycan synthesis</keyword>
<keyword id="KW-0645">Protease</keyword>
<keyword id="KW-1185">Reference proteome</keyword>
<keyword id="KW-0735">Signal-anchor</keyword>
<keyword id="KW-0808">Transferase</keyword>
<keyword id="KW-0812">Transmembrane</keyword>
<keyword id="KW-1133">Transmembrane helix</keyword>
<sequence>MFKIKKKKLFIPIIILVLTAFLALIGYISIIFLGHYVIDEKKLILHASSKIVDQNGDEVASLYTENREPVSINEIPKQVREAFIAVEDKRFYEHHGIDAKSVGRAVYRDILAGGKVEGGSTITQQLAKNIFLTHDKTFLRKTKEVIIAINLERDYSKDKLLEMYLNQLYFGHGVYGIQAASHYYFNKEVKDLTVSEGAVLAAIPKAPSTYSPILHPDKNKERRDTILGMMNDQGYISAKEAVTAQGRTLGLHVKKQSETPWFDSYIDLVIKEAEDKYSISGEQLLQGGYTIKVPLDSKLQKTAYQVMKEGSYYPGTDQNAEGSAVFINNKTGGVEAAIGGRDYTSKGYNRVTAVRQPGSTFKPLAVYGPAMQEKKFKPYSLLKDELQSYGDYTPKNYDSRYEGEVTMSDAITYSKNAPAVWTLNEIGVETGKSYLKANGIDIPDEGLALALGGLEKGVSPLQLAGAFHTFAANGTYTEPFFISSIIDEDGETIADHKEEGKRVFSKQTSWNMTRMLQQVVKKGTATSGTYHGDLAGKTGSTSYTGVSGATKDAWFAGYTPKITGAVWMGYDKTDQNHYLKAGSSYPTRLFKDILTQAGETGHVFTKPKNVKELESPIELKPVKTLTADYTFKAAGLFTIELKWDAQEDDRAVYRIYVNKDGEETLLDSVEGKGSYEIPYANLFSGASYKIVPYNTQTKREGEGTDYVQPKLFSS</sequence>
<protein>
    <recommendedName>
        <fullName>Penicillin-binding protein 1F</fullName>
        <shortName>PBP-1F</shortName>
    </recommendedName>
    <alternativeName>
        <fullName>Penicillin-binding protein F</fullName>
    </alternativeName>
    <domain>
        <recommendedName>
            <fullName>Penicillin-insensitive transglycosylase</fullName>
            <ecNumber evidence="1">2.4.99.28</ecNumber>
        </recommendedName>
        <alternativeName>
            <fullName>Peptidoglycan TGase</fullName>
        </alternativeName>
    </domain>
    <domain>
        <recommendedName>
            <fullName>Penicillin-sensitive transpeptidase</fullName>
            <ecNumber evidence="1">3.4.16.4</ecNumber>
        </recommendedName>
        <alternativeName>
            <fullName>DD-transpeptidase</fullName>
        </alternativeName>
    </domain>
</protein>
<name>PBPF_BACSU</name>
<gene>
    <name type="primary">pbpF</name>
    <name type="synonym">ponA</name>
    <name type="ordered locus">BSU10110</name>
</gene>
<feature type="chain" id="PRO_0000083180" description="Penicillin-binding protein 1F">
    <location>
        <begin position="1"/>
        <end position="714"/>
    </location>
</feature>
<feature type="topological domain" description="Cytoplasmic" evidence="3">
    <location>
        <begin position="1"/>
        <end position="12"/>
    </location>
</feature>
<feature type="transmembrane region" description="Helical; Signal-anchor for type II membrane protein" evidence="3">
    <location>
        <begin position="13"/>
        <end position="33"/>
    </location>
</feature>
<feature type="topological domain" description="Extracellular" evidence="3">
    <location>
        <begin position="34"/>
        <end position="714"/>
    </location>
</feature>
<feature type="region of interest" description="Transglycosylase">
    <location>
        <begin position="49"/>
        <end position="217"/>
    </location>
</feature>
<feature type="region of interest" description="Transpeptidase">
    <location>
        <begin position="297"/>
        <end position="592"/>
    </location>
</feature>
<feature type="active site" description="Proton donor; for transglycosylase activity" evidence="2">
    <location>
        <position position="87"/>
    </location>
</feature>
<feature type="active site" description="Acyl-ester intermediate; for transpeptidase activity" evidence="2">
    <location>
        <position position="359"/>
    </location>
</feature>
<feature type="sequence conflict" description="In Ref. 1; CAA74517 and 4; AAA71942." evidence="4" ref="1 4">
    <original>S</original>
    <variation>T</variation>
    <location>
        <position position="120"/>
    </location>
</feature>
<comment type="function">
    <text>Cell wall formation. May be involved in outgrowth of the germinated spore or it could function in the synthesis of the germ cell wall.</text>
</comment>
<comment type="catalytic activity">
    <reaction evidence="1">
        <text>[GlcNAc-(1-&gt;4)-Mur2Ac(oyl-L-Ala-gamma-D-Glu-L-Lys-D-Ala-D-Ala)](n)-di-trans,octa-cis-undecaprenyl diphosphate + beta-D-GlcNAc-(1-&gt;4)-Mur2Ac(oyl-L-Ala-gamma-D-Glu-L-Lys-D-Ala-D-Ala)-di-trans,octa-cis-undecaprenyl diphosphate = [GlcNAc-(1-&gt;4)-Mur2Ac(oyl-L-Ala-gamma-D-Glu-L-Lys-D-Ala-D-Ala)](n+1)-di-trans,octa-cis-undecaprenyl diphosphate + di-trans,octa-cis-undecaprenyl diphosphate + H(+)</text>
        <dbReference type="Rhea" id="RHEA:23708"/>
        <dbReference type="Rhea" id="RHEA-COMP:9602"/>
        <dbReference type="Rhea" id="RHEA-COMP:9603"/>
        <dbReference type="ChEBI" id="CHEBI:15378"/>
        <dbReference type="ChEBI" id="CHEBI:58405"/>
        <dbReference type="ChEBI" id="CHEBI:60033"/>
        <dbReference type="ChEBI" id="CHEBI:78435"/>
        <dbReference type="EC" id="2.4.99.28"/>
    </reaction>
</comment>
<comment type="catalytic activity">
    <reaction evidence="1">
        <text>Preferential cleavage: (Ac)2-L-Lys-D-Ala-|-D-Ala. Also transpeptidation of peptidyl-alanyl moieties that are N-acyl substituents of D-alanine.</text>
        <dbReference type="EC" id="3.4.16.4"/>
    </reaction>
</comment>
<comment type="pathway">
    <text>Cell wall biogenesis; peptidoglycan biosynthesis.</text>
</comment>
<comment type="subcellular location">
    <subcellularLocation>
        <location>Cell membrane</location>
        <topology>Single-pass membrane protein</topology>
    </subcellularLocation>
</comment>
<comment type="developmental stage">
    <text>Expression remains constant during vegetative growth, decreases during early sporulation, and is induced in the forespore during late sporulation.</text>
</comment>
<comment type="similarity">
    <text evidence="4">In the N-terminal section; belongs to the glycosyltransferase 51 family.</text>
</comment>
<comment type="similarity">
    <text evidence="4">In the C-terminal section; belongs to the transpeptidase family.</text>
</comment>